<dbReference type="EC" id="2.7.1.33" evidence="1"/>
<dbReference type="EMBL" id="AP009389">
    <property type="protein sequence ID" value="BAF58439.1"/>
    <property type="molecule type" value="Genomic_DNA"/>
</dbReference>
<dbReference type="SMR" id="A5D5P9"/>
<dbReference type="STRING" id="370438.PTH_0258"/>
<dbReference type="KEGG" id="pth:PTH_0258"/>
<dbReference type="eggNOG" id="COG1521">
    <property type="taxonomic scope" value="Bacteria"/>
</dbReference>
<dbReference type="HOGENOM" id="CLU_066627_1_0_9"/>
<dbReference type="UniPathway" id="UPA00241">
    <property type="reaction ID" value="UER00352"/>
</dbReference>
<dbReference type="Proteomes" id="UP000006556">
    <property type="component" value="Chromosome"/>
</dbReference>
<dbReference type="GO" id="GO:0005737">
    <property type="term" value="C:cytoplasm"/>
    <property type="evidence" value="ECO:0007669"/>
    <property type="project" value="UniProtKB-SubCell"/>
</dbReference>
<dbReference type="GO" id="GO:0005524">
    <property type="term" value="F:ATP binding"/>
    <property type="evidence" value="ECO:0007669"/>
    <property type="project" value="UniProtKB-UniRule"/>
</dbReference>
<dbReference type="GO" id="GO:0046872">
    <property type="term" value="F:metal ion binding"/>
    <property type="evidence" value="ECO:0007669"/>
    <property type="project" value="UniProtKB-KW"/>
</dbReference>
<dbReference type="GO" id="GO:0004594">
    <property type="term" value="F:pantothenate kinase activity"/>
    <property type="evidence" value="ECO:0007669"/>
    <property type="project" value="UniProtKB-UniRule"/>
</dbReference>
<dbReference type="GO" id="GO:0015937">
    <property type="term" value="P:coenzyme A biosynthetic process"/>
    <property type="evidence" value="ECO:0007669"/>
    <property type="project" value="UniProtKB-UniRule"/>
</dbReference>
<dbReference type="CDD" id="cd24015">
    <property type="entry name" value="ASKHA_NBD_PanK-III"/>
    <property type="match status" value="1"/>
</dbReference>
<dbReference type="Gene3D" id="3.30.420.40">
    <property type="match status" value="2"/>
</dbReference>
<dbReference type="HAMAP" id="MF_01274">
    <property type="entry name" value="Pantothen_kinase_3"/>
    <property type="match status" value="1"/>
</dbReference>
<dbReference type="InterPro" id="IPR043129">
    <property type="entry name" value="ATPase_NBD"/>
</dbReference>
<dbReference type="InterPro" id="IPR004619">
    <property type="entry name" value="Type_III_PanK"/>
</dbReference>
<dbReference type="NCBIfam" id="TIGR00671">
    <property type="entry name" value="baf"/>
    <property type="match status" value="1"/>
</dbReference>
<dbReference type="NCBIfam" id="NF009844">
    <property type="entry name" value="PRK13318.1-2"/>
    <property type="match status" value="1"/>
</dbReference>
<dbReference type="NCBIfam" id="NF009847">
    <property type="entry name" value="PRK13318.1-5"/>
    <property type="match status" value="1"/>
</dbReference>
<dbReference type="NCBIfam" id="NF009848">
    <property type="entry name" value="PRK13318.1-6"/>
    <property type="match status" value="1"/>
</dbReference>
<dbReference type="NCBIfam" id="NF009855">
    <property type="entry name" value="PRK13321.1"/>
    <property type="match status" value="1"/>
</dbReference>
<dbReference type="PANTHER" id="PTHR34265">
    <property type="entry name" value="TYPE III PANTOTHENATE KINASE"/>
    <property type="match status" value="1"/>
</dbReference>
<dbReference type="PANTHER" id="PTHR34265:SF1">
    <property type="entry name" value="TYPE III PANTOTHENATE KINASE"/>
    <property type="match status" value="1"/>
</dbReference>
<dbReference type="Pfam" id="PF03309">
    <property type="entry name" value="Pan_kinase"/>
    <property type="match status" value="1"/>
</dbReference>
<dbReference type="SUPFAM" id="SSF53067">
    <property type="entry name" value="Actin-like ATPase domain"/>
    <property type="match status" value="2"/>
</dbReference>
<protein>
    <recommendedName>
        <fullName evidence="1">Type III pantothenate kinase</fullName>
        <ecNumber evidence="1">2.7.1.33</ecNumber>
    </recommendedName>
    <alternativeName>
        <fullName evidence="1">PanK-III</fullName>
    </alternativeName>
    <alternativeName>
        <fullName evidence="1">Pantothenic acid kinase</fullName>
    </alternativeName>
</protein>
<accession>A5D5P9</accession>
<comment type="function">
    <text evidence="1">Catalyzes the phosphorylation of pantothenate (Pan), the first step in CoA biosynthesis.</text>
</comment>
<comment type="catalytic activity">
    <reaction evidence="1">
        <text>(R)-pantothenate + ATP = (R)-4'-phosphopantothenate + ADP + H(+)</text>
        <dbReference type="Rhea" id="RHEA:16373"/>
        <dbReference type="ChEBI" id="CHEBI:10986"/>
        <dbReference type="ChEBI" id="CHEBI:15378"/>
        <dbReference type="ChEBI" id="CHEBI:29032"/>
        <dbReference type="ChEBI" id="CHEBI:30616"/>
        <dbReference type="ChEBI" id="CHEBI:456216"/>
        <dbReference type="EC" id="2.7.1.33"/>
    </reaction>
</comment>
<comment type="cofactor">
    <cofactor evidence="1">
        <name>NH4(+)</name>
        <dbReference type="ChEBI" id="CHEBI:28938"/>
    </cofactor>
    <cofactor evidence="1">
        <name>K(+)</name>
        <dbReference type="ChEBI" id="CHEBI:29103"/>
    </cofactor>
    <text evidence="1">A monovalent cation. Ammonium or potassium.</text>
</comment>
<comment type="pathway">
    <text evidence="1">Cofactor biosynthesis; coenzyme A biosynthesis; CoA from (R)-pantothenate: step 1/5.</text>
</comment>
<comment type="subunit">
    <text evidence="1">Homodimer.</text>
</comment>
<comment type="subcellular location">
    <subcellularLocation>
        <location evidence="1">Cytoplasm</location>
    </subcellularLocation>
</comment>
<comment type="similarity">
    <text evidence="1">Belongs to the type III pantothenate kinase family.</text>
</comment>
<keyword id="KW-0067">ATP-binding</keyword>
<keyword id="KW-0173">Coenzyme A biosynthesis</keyword>
<keyword id="KW-0963">Cytoplasm</keyword>
<keyword id="KW-0418">Kinase</keyword>
<keyword id="KW-0479">Metal-binding</keyword>
<keyword id="KW-0547">Nucleotide-binding</keyword>
<keyword id="KW-0630">Potassium</keyword>
<keyword id="KW-1185">Reference proteome</keyword>
<keyword id="KW-0808">Transferase</keyword>
<gene>
    <name evidence="1" type="primary">coaX</name>
    <name type="ordered locus">PTH_0258</name>
</gene>
<sequence length="256" mass="27736">MILVFDVGNTNIVLGVFSGSRLVANWRLSTDRYRTSDEYGIMLRELFAFSGLEMKQIKAVVVSTVVPPLTFTLERLCQKYFNLTPLVVGPGIKTGLSIKIDNPREVGADRIVNAVAGYEQYGGPLVIVDFGTATTFCAVSARGEYLGGAIAPGISISTEALFARAAKLPRVEVVKPLSVIGRNTVASMQAGIFYGFVGQVDEIVKRMKKELGENTRVIATGGLAGLIAQESATIEQVDPFLTLKGLRLIYERNAQR</sequence>
<name>COAX_PELTS</name>
<organism>
    <name type="scientific">Pelotomaculum thermopropionicum (strain DSM 13744 / JCM 10971 / SI)</name>
    <dbReference type="NCBI Taxonomy" id="370438"/>
    <lineage>
        <taxon>Bacteria</taxon>
        <taxon>Bacillati</taxon>
        <taxon>Bacillota</taxon>
        <taxon>Clostridia</taxon>
        <taxon>Eubacteriales</taxon>
        <taxon>Desulfotomaculaceae</taxon>
        <taxon>Pelotomaculum</taxon>
    </lineage>
</organism>
<feature type="chain" id="PRO_1000085856" description="Type III pantothenate kinase">
    <location>
        <begin position="1"/>
        <end position="256"/>
    </location>
</feature>
<feature type="active site" description="Proton acceptor" evidence="1">
    <location>
        <position position="109"/>
    </location>
</feature>
<feature type="binding site" evidence="1">
    <location>
        <begin position="6"/>
        <end position="13"/>
    </location>
    <ligand>
        <name>ATP</name>
        <dbReference type="ChEBI" id="CHEBI:30616"/>
    </ligand>
</feature>
<feature type="binding site" evidence="1">
    <location>
        <begin position="107"/>
        <end position="110"/>
    </location>
    <ligand>
        <name>substrate</name>
    </ligand>
</feature>
<feature type="binding site" evidence="1">
    <location>
        <position position="129"/>
    </location>
    <ligand>
        <name>K(+)</name>
        <dbReference type="ChEBI" id="CHEBI:29103"/>
    </ligand>
</feature>
<feature type="binding site" evidence="1">
    <location>
        <position position="132"/>
    </location>
    <ligand>
        <name>ATP</name>
        <dbReference type="ChEBI" id="CHEBI:30616"/>
    </ligand>
</feature>
<feature type="binding site" evidence="1">
    <location>
        <position position="184"/>
    </location>
    <ligand>
        <name>substrate</name>
    </ligand>
</feature>
<reference key="1">
    <citation type="journal article" date="2008" name="Genome Res.">
        <title>The genome of Pelotomaculum thermopropionicum reveals niche-associated evolution in anaerobic microbiota.</title>
        <authorList>
            <person name="Kosaka T."/>
            <person name="Kato S."/>
            <person name="Shimoyama T."/>
            <person name="Ishii S."/>
            <person name="Abe T."/>
            <person name="Watanabe K."/>
        </authorList>
    </citation>
    <scope>NUCLEOTIDE SEQUENCE [LARGE SCALE GENOMIC DNA]</scope>
    <source>
        <strain>DSM 13744 / JCM 10971 / SI</strain>
    </source>
</reference>
<evidence type="ECO:0000255" key="1">
    <source>
        <dbReference type="HAMAP-Rule" id="MF_01274"/>
    </source>
</evidence>
<proteinExistence type="inferred from homology"/>